<keyword id="KW-0067">ATP-binding</keyword>
<keyword id="KW-1035">Host cytoplasm</keyword>
<keyword id="KW-0378">Hydrolase</keyword>
<keyword id="KW-0460">Magnesium</keyword>
<keyword id="KW-0479">Metal-binding</keyword>
<keyword id="KW-0547">Nucleotide-binding</keyword>
<keyword id="KW-0694">RNA-binding</keyword>
<organism>
    <name type="scientific">Rotavirus A (strain RVA/Human/United States/Wa/1974/G1P1A[8])</name>
    <name type="common">RV-A</name>
    <dbReference type="NCBI Taxonomy" id="10962"/>
    <lineage>
        <taxon>Viruses</taxon>
        <taxon>Riboviria</taxon>
        <taxon>Orthornavirae</taxon>
        <taxon>Duplornaviricota</taxon>
        <taxon>Resentoviricetes</taxon>
        <taxon>Reovirales</taxon>
        <taxon>Sedoreoviridae</taxon>
        <taxon>Rotavirus</taxon>
        <taxon>Rotavirus A</taxon>
    </lineage>
</organism>
<sequence length="317" mass="36541">MAELACFCYPHLENDSYKFIPFNNLAIKCMLTAKVEKKDQDKFYNSIVYGIAPPPQFKKRYNTSDNSRGMNYETIMFNKVAVLICEALNSIKITQSDVANVLSRVVSVRHLENLVLRKENHQDVLFHSKELLLKSVLIAIGQSKEIETTATAEGGEIVFQNAAFTMWKLTYLDHKLMPILDQNFIEYKITLNEDKPISDVCIKELVAELRWQYNRFAVITHGKGHYRVVKYSSVANHADRVFATYKNSAKSGNVIDFNLLDQRIIWQNWYAFTSSMKQGNTLDVCKKLLFQKMKQEKNPFKGLSTDRKMDEVSHVGI</sequence>
<dbReference type="EC" id="3.6.4.-" evidence="1"/>
<dbReference type="EMBL" id="L04534">
    <property type="protein sequence ID" value="AAA47301.1"/>
    <property type="molecule type" value="Genomic_RNA"/>
</dbReference>
<dbReference type="SMR" id="Q03245"/>
<dbReference type="Proteomes" id="UP000006581">
    <property type="component" value="Genome"/>
</dbReference>
<dbReference type="GO" id="GO:0030430">
    <property type="term" value="C:host cell cytoplasm"/>
    <property type="evidence" value="ECO:0007669"/>
    <property type="project" value="UniProtKB-SubCell"/>
</dbReference>
<dbReference type="GO" id="GO:0005524">
    <property type="term" value="F:ATP binding"/>
    <property type="evidence" value="ECO:0007669"/>
    <property type="project" value="UniProtKB-KW"/>
</dbReference>
<dbReference type="GO" id="GO:0046872">
    <property type="term" value="F:metal ion binding"/>
    <property type="evidence" value="ECO:0007669"/>
    <property type="project" value="UniProtKB-UniRule"/>
</dbReference>
<dbReference type="GO" id="GO:0004550">
    <property type="term" value="F:nucleoside diphosphate kinase activity"/>
    <property type="evidence" value="ECO:0007669"/>
    <property type="project" value="InterPro"/>
</dbReference>
<dbReference type="GO" id="GO:0017111">
    <property type="term" value="F:ribonucleoside triphosphate phosphatase activity"/>
    <property type="evidence" value="ECO:0007669"/>
    <property type="project" value="InterPro"/>
</dbReference>
<dbReference type="GO" id="GO:0003723">
    <property type="term" value="F:RNA binding"/>
    <property type="evidence" value="ECO:0007669"/>
    <property type="project" value="UniProtKB-UniRule"/>
</dbReference>
<dbReference type="GO" id="GO:0019079">
    <property type="term" value="P:viral genome replication"/>
    <property type="evidence" value="ECO:0007669"/>
    <property type="project" value="UniProtKB-UniRule"/>
</dbReference>
<dbReference type="Gene3D" id="3.30.428.20">
    <property type="entry name" value="Rotavirus NSP2 fragment, C-terminal domain"/>
    <property type="match status" value="1"/>
</dbReference>
<dbReference type="Gene3D" id="3.90.1400.10">
    <property type="entry name" value="Rotavirus NSP2 fragment, N-terminal domain"/>
    <property type="match status" value="1"/>
</dbReference>
<dbReference type="HAMAP" id="MF_04089">
    <property type="entry name" value="ROTA_NSP2"/>
    <property type="match status" value="1"/>
</dbReference>
<dbReference type="InterPro" id="IPR048306">
    <property type="entry name" value="Rota_NS35_C"/>
</dbReference>
<dbReference type="InterPro" id="IPR048573">
    <property type="entry name" value="Rota_NS35_N"/>
</dbReference>
<dbReference type="InterPro" id="IPR003668">
    <property type="entry name" value="Rotavirus_NSP2"/>
</dbReference>
<dbReference type="InterPro" id="IPR024076">
    <property type="entry name" value="Rotavirus_NSP2_C"/>
</dbReference>
<dbReference type="InterPro" id="IPR024068">
    <property type="entry name" value="Rotavirus_NSP2_N"/>
</dbReference>
<dbReference type="Pfam" id="PF02509">
    <property type="entry name" value="Rota_NS35_C"/>
    <property type="match status" value="1"/>
</dbReference>
<dbReference type="Pfam" id="PF21067">
    <property type="entry name" value="Rota_NS35_N"/>
    <property type="match status" value="1"/>
</dbReference>
<dbReference type="SUPFAM" id="SSF75347">
    <property type="entry name" value="Rotavirus NSP2 fragment, C-terminal domain"/>
    <property type="match status" value="1"/>
</dbReference>
<dbReference type="SUPFAM" id="SSF75574">
    <property type="entry name" value="Rotavirus NSP2 fragment, N-terminal domain"/>
    <property type="match status" value="1"/>
</dbReference>
<organismHost>
    <name type="scientific">Homo sapiens</name>
    <name type="common">Human</name>
    <dbReference type="NCBI Taxonomy" id="9606"/>
</organismHost>
<proteinExistence type="inferred from homology"/>
<feature type="chain" id="PRO_0000149548" description="Non-structural protein 2">
    <location>
        <begin position="1"/>
        <end position="317"/>
    </location>
</feature>
<feature type="region of interest" description="RNA-binding" evidence="1">
    <location>
        <begin position="205"/>
        <end position="241"/>
    </location>
</feature>
<feature type="active site" description="For NTPase and RTPase activities" evidence="1">
    <location>
        <position position="225"/>
    </location>
</feature>
<feature type="binding site" evidence="1">
    <location>
        <begin position="107"/>
        <end position="109"/>
    </location>
    <ligand>
        <name>ATP</name>
        <dbReference type="ChEBI" id="CHEBI:30616"/>
    </ligand>
</feature>
<feature type="binding site" evidence="1">
    <location>
        <position position="188"/>
    </location>
    <ligand>
        <name>ATP</name>
        <dbReference type="ChEBI" id="CHEBI:30616"/>
    </ligand>
</feature>
<feature type="binding site" evidence="1">
    <location>
        <begin position="221"/>
        <end position="223"/>
    </location>
    <ligand>
        <name>ATP</name>
        <dbReference type="ChEBI" id="CHEBI:30616"/>
    </ligand>
</feature>
<feature type="binding site" evidence="1">
    <location>
        <position position="227"/>
    </location>
    <ligand>
        <name>ATP</name>
        <dbReference type="ChEBI" id="CHEBI:30616"/>
    </ligand>
</feature>
<name>NSP2_ROTHW</name>
<reference key="1">
    <citation type="journal article" date="1993" name="Virology">
        <title>Nucleotide and amino acid sequence analysis of the rotavirus nonstructural RNA-binding protein NS35.</title>
        <authorList>
            <person name="Patton J.T."/>
            <person name="Salter-Cid L."/>
            <person name="Kalbach A.N."/>
            <person name="Mansell E.A."/>
            <person name="Kattoura M.D."/>
        </authorList>
    </citation>
    <scope>NUCLEOTIDE SEQUENCE [GENOMIC RNA]</scope>
</reference>
<accession>Q03245</accession>
<protein>
    <recommendedName>
        <fullName evidence="1">Non-structural protein 2</fullName>
        <shortName evidence="1">NSP2</shortName>
        <ecNumber evidence="1">3.6.4.-</ecNumber>
    </recommendedName>
    <alternativeName>
        <fullName evidence="1">NCVP3</fullName>
    </alternativeName>
    <alternativeName>
        <fullName evidence="1">Non-structural RNA-binding protein 35</fullName>
        <shortName evidence="1">NS35</shortName>
    </alternativeName>
</protein>
<evidence type="ECO:0000255" key="1">
    <source>
        <dbReference type="HAMAP-Rule" id="MF_04089"/>
    </source>
</evidence>
<comment type="function">
    <text evidence="1">Participates in replication and packaging of the viral genome. Plays a crucial role, together with NSP5, in the formation of virus factories (viroplasms), which are large inclusions in the host cytoplasm where replication intermediates are assembled and viral RNA replication takes place. Displays ssRNA binding, NTPase, RNA triphosphatase (RTPase) and ATP-independent helix-unwinding activities. The unwinding activity may prepare and organize plus-strand RNAs for packaging and replication by removing interfering secondary structures. The RTPase activity plays a role in the removal of the gamma-phosphate from the rotavirus RNA minus strands of dsRNA genome segments. Participates in the selective exclusion of host proteins from stress granules (SG) and P bodies (PB). Also participates in the sequestration of these remodeled organelles in viral factories.</text>
</comment>
<comment type="cofactor">
    <cofactor evidence="1">
        <name>Mg(2+)</name>
        <dbReference type="ChEBI" id="CHEBI:18420"/>
    </cofactor>
</comment>
<comment type="subunit">
    <text evidence="1">Homooctamer. Interacts with VP1; this interaction is weak. Interacts with NSP5; this interaction leads to up-regulation of NSP5 phosphorylation and formation of viral factories. Interacts with host DCP1A, DCP1B, DDX6, EDC4 and EIF2S1/eIF2-alpha; these interactions are probably part of the sequestration of some host SGs and PBs proteins in viral factories.</text>
</comment>
<comment type="subcellular location">
    <subcellularLocation>
        <location evidence="1">Host cytoplasm</location>
    </subcellularLocation>
    <text evidence="1">Found in spherical cytoplasmic structures, called viral factories, that appear early after infection and are the site of viral replication and packaging.</text>
</comment>
<comment type="similarity">
    <text evidence="1">Belongs to the rotavirus NSP2 family.</text>
</comment>